<reference key="1">
    <citation type="submission" date="2005-08" db="EMBL/GenBank/DDBJ databases">
        <title>Complete sequence of Pelodictyon luteolum DSM 273.</title>
        <authorList>
            <consortium name="US DOE Joint Genome Institute"/>
            <person name="Copeland A."/>
            <person name="Lucas S."/>
            <person name="Lapidus A."/>
            <person name="Barry K."/>
            <person name="Detter J.C."/>
            <person name="Glavina T."/>
            <person name="Hammon N."/>
            <person name="Israni S."/>
            <person name="Pitluck S."/>
            <person name="Bryant D."/>
            <person name="Schmutz J."/>
            <person name="Larimer F."/>
            <person name="Land M."/>
            <person name="Kyrpides N."/>
            <person name="Ivanova N."/>
            <person name="Richardson P."/>
        </authorList>
    </citation>
    <scope>NUCLEOTIDE SEQUENCE [LARGE SCALE GENOMIC DNA]</scope>
    <source>
        <strain>DSM 273 / BCRC 81028 / 2530</strain>
    </source>
</reference>
<evidence type="ECO:0000255" key="1">
    <source>
        <dbReference type="HAMAP-Rule" id="MF_00235"/>
    </source>
</evidence>
<organism>
    <name type="scientific">Chlorobium luteolum (strain DSM 273 / BCRC 81028 / 2530)</name>
    <name type="common">Pelodictyon luteolum</name>
    <dbReference type="NCBI Taxonomy" id="319225"/>
    <lineage>
        <taxon>Bacteria</taxon>
        <taxon>Pseudomonadati</taxon>
        <taxon>Chlorobiota</taxon>
        <taxon>Chlorobiia</taxon>
        <taxon>Chlorobiales</taxon>
        <taxon>Chlorobiaceae</taxon>
        <taxon>Chlorobium/Pelodictyon group</taxon>
        <taxon>Pelodictyon</taxon>
    </lineage>
</organism>
<proteinExistence type="inferred from homology"/>
<gene>
    <name evidence="1" type="primary">adk</name>
    <name type="ordered locus">Plut_0949</name>
</gene>
<feature type="chain" id="PRO_1000021755" description="Adenylate kinase">
    <location>
        <begin position="1"/>
        <end position="220"/>
    </location>
</feature>
<feature type="region of interest" description="NMP" evidence="1">
    <location>
        <begin position="30"/>
        <end position="59"/>
    </location>
</feature>
<feature type="region of interest" description="LID" evidence="1">
    <location>
        <begin position="122"/>
        <end position="159"/>
    </location>
</feature>
<feature type="binding site" evidence="1">
    <location>
        <begin position="10"/>
        <end position="15"/>
    </location>
    <ligand>
        <name>ATP</name>
        <dbReference type="ChEBI" id="CHEBI:30616"/>
    </ligand>
</feature>
<feature type="binding site" evidence="1">
    <location>
        <position position="31"/>
    </location>
    <ligand>
        <name>AMP</name>
        <dbReference type="ChEBI" id="CHEBI:456215"/>
    </ligand>
</feature>
<feature type="binding site" evidence="1">
    <location>
        <position position="36"/>
    </location>
    <ligand>
        <name>AMP</name>
        <dbReference type="ChEBI" id="CHEBI:456215"/>
    </ligand>
</feature>
<feature type="binding site" evidence="1">
    <location>
        <begin position="57"/>
        <end position="59"/>
    </location>
    <ligand>
        <name>AMP</name>
        <dbReference type="ChEBI" id="CHEBI:456215"/>
    </ligand>
</feature>
<feature type="binding site" evidence="1">
    <location>
        <begin position="85"/>
        <end position="88"/>
    </location>
    <ligand>
        <name>AMP</name>
        <dbReference type="ChEBI" id="CHEBI:456215"/>
    </ligand>
</feature>
<feature type="binding site" evidence="1">
    <location>
        <position position="92"/>
    </location>
    <ligand>
        <name>AMP</name>
        <dbReference type="ChEBI" id="CHEBI:456215"/>
    </ligand>
</feature>
<feature type="binding site" evidence="1">
    <location>
        <position position="123"/>
    </location>
    <ligand>
        <name>ATP</name>
        <dbReference type="ChEBI" id="CHEBI:30616"/>
    </ligand>
</feature>
<feature type="binding site" evidence="1">
    <location>
        <begin position="132"/>
        <end position="133"/>
    </location>
    <ligand>
        <name>ATP</name>
        <dbReference type="ChEBI" id="CHEBI:30616"/>
    </ligand>
</feature>
<feature type="binding site" evidence="1">
    <location>
        <position position="156"/>
    </location>
    <ligand>
        <name>AMP</name>
        <dbReference type="ChEBI" id="CHEBI:456215"/>
    </ligand>
</feature>
<feature type="binding site" evidence="1">
    <location>
        <position position="167"/>
    </location>
    <ligand>
        <name>AMP</name>
        <dbReference type="ChEBI" id="CHEBI:456215"/>
    </ligand>
</feature>
<feature type="binding site" evidence="1">
    <location>
        <position position="205"/>
    </location>
    <ligand>
        <name>ATP</name>
        <dbReference type="ChEBI" id="CHEBI:30616"/>
    </ligand>
</feature>
<protein>
    <recommendedName>
        <fullName evidence="1">Adenylate kinase</fullName>
        <shortName evidence="1">AK</shortName>
        <ecNumber evidence="1">2.7.4.3</ecNumber>
    </recommendedName>
    <alternativeName>
        <fullName evidence="1">ATP-AMP transphosphorylase</fullName>
    </alternativeName>
    <alternativeName>
        <fullName evidence="1">ATP:AMP phosphotransferase</fullName>
    </alternativeName>
    <alternativeName>
        <fullName evidence="1">Adenylate monophosphate kinase</fullName>
    </alternativeName>
</protein>
<accession>Q3B4C0</accession>
<sequence>MRIILLGAPGAGKGTQSNYISKSLAIPQISTGDMLRAAVKAGTPLGLKAKEVMDGGNLVSDDIIMDIIKERLLEHDCKEGCLFDGFPRTIAQAESLDRQGIDIDHVIEIHVDDREIIDRMSGRRVHPASGRTYHIRFNPPQTAGMDDETGEPLVQRADDTEETVKKRLEIYHDQTAPLIEYYSRRAAGAGTGAFAPRYTRIEGTGSVEEIRDRILEALRG</sequence>
<name>KAD_CHLL3</name>
<keyword id="KW-0067">ATP-binding</keyword>
<keyword id="KW-0963">Cytoplasm</keyword>
<keyword id="KW-0418">Kinase</keyword>
<keyword id="KW-0545">Nucleotide biosynthesis</keyword>
<keyword id="KW-0547">Nucleotide-binding</keyword>
<keyword id="KW-1185">Reference proteome</keyword>
<keyword id="KW-0808">Transferase</keyword>
<dbReference type="EC" id="2.7.4.3" evidence="1"/>
<dbReference type="EMBL" id="CP000096">
    <property type="protein sequence ID" value="ABB23811.1"/>
    <property type="molecule type" value="Genomic_DNA"/>
</dbReference>
<dbReference type="RefSeq" id="WP_011357685.1">
    <property type="nucleotide sequence ID" value="NC_007512.1"/>
</dbReference>
<dbReference type="SMR" id="Q3B4C0"/>
<dbReference type="STRING" id="319225.Plut_0949"/>
<dbReference type="KEGG" id="plt:Plut_0949"/>
<dbReference type="eggNOG" id="COG0563">
    <property type="taxonomic scope" value="Bacteria"/>
</dbReference>
<dbReference type="HOGENOM" id="CLU_032354_1_2_10"/>
<dbReference type="OrthoDB" id="9805030at2"/>
<dbReference type="UniPathway" id="UPA00588">
    <property type="reaction ID" value="UER00649"/>
</dbReference>
<dbReference type="Proteomes" id="UP000002709">
    <property type="component" value="Chromosome"/>
</dbReference>
<dbReference type="GO" id="GO:0005737">
    <property type="term" value="C:cytoplasm"/>
    <property type="evidence" value="ECO:0007669"/>
    <property type="project" value="UniProtKB-SubCell"/>
</dbReference>
<dbReference type="GO" id="GO:0004017">
    <property type="term" value="F:adenylate kinase activity"/>
    <property type="evidence" value="ECO:0007669"/>
    <property type="project" value="UniProtKB-UniRule"/>
</dbReference>
<dbReference type="GO" id="GO:0005524">
    <property type="term" value="F:ATP binding"/>
    <property type="evidence" value="ECO:0007669"/>
    <property type="project" value="UniProtKB-UniRule"/>
</dbReference>
<dbReference type="GO" id="GO:0044209">
    <property type="term" value="P:AMP salvage"/>
    <property type="evidence" value="ECO:0007669"/>
    <property type="project" value="UniProtKB-UniRule"/>
</dbReference>
<dbReference type="CDD" id="cd01428">
    <property type="entry name" value="ADK"/>
    <property type="match status" value="1"/>
</dbReference>
<dbReference type="FunFam" id="3.40.50.300:FF:000106">
    <property type="entry name" value="Adenylate kinase mitochondrial"/>
    <property type="match status" value="1"/>
</dbReference>
<dbReference type="Gene3D" id="3.40.50.300">
    <property type="entry name" value="P-loop containing nucleotide triphosphate hydrolases"/>
    <property type="match status" value="1"/>
</dbReference>
<dbReference type="HAMAP" id="MF_00235">
    <property type="entry name" value="Adenylate_kinase_Adk"/>
    <property type="match status" value="1"/>
</dbReference>
<dbReference type="InterPro" id="IPR006259">
    <property type="entry name" value="Adenyl_kin_sub"/>
</dbReference>
<dbReference type="InterPro" id="IPR000850">
    <property type="entry name" value="Adenylat/UMP-CMP_kin"/>
</dbReference>
<dbReference type="InterPro" id="IPR033690">
    <property type="entry name" value="Adenylat_kinase_CS"/>
</dbReference>
<dbReference type="InterPro" id="IPR007862">
    <property type="entry name" value="Adenylate_kinase_lid-dom"/>
</dbReference>
<dbReference type="InterPro" id="IPR027417">
    <property type="entry name" value="P-loop_NTPase"/>
</dbReference>
<dbReference type="NCBIfam" id="TIGR01351">
    <property type="entry name" value="adk"/>
    <property type="match status" value="1"/>
</dbReference>
<dbReference type="NCBIfam" id="NF001379">
    <property type="entry name" value="PRK00279.1-1"/>
    <property type="match status" value="1"/>
</dbReference>
<dbReference type="NCBIfam" id="NF001380">
    <property type="entry name" value="PRK00279.1-2"/>
    <property type="match status" value="1"/>
</dbReference>
<dbReference type="NCBIfam" id="NF001381">
    <property type="entry name" value="PRK00279.1-3"/>
    <property type="match status" value="1"/>
</dbReference>
<dbReference type="NCBIfam" id="NF011100">
    <property type="entry name" value="PRK14527.1"/>
    <property type="match status" value="1"/>
</dbReference>
<dbReference type="PANTHER" id="PTHR23359">
    <property type="entry name" value="NUCLEOTIDE KINASE"/>
    <property type="match status" value="1"/>
</dbReference>
<dbReference type="Pfam" id="PF00406">
    <property type="entry name" value="ADK"/>
    <property type="match status" value="1"/>
</dbReference>
<dbReference type="Pfam" id="PF05191">
    <property type="entry name" value="ADK_lid"/>
    <property type="match status" value="1"/>
</dbReference>
<dbReference type="PRINTS" id="PR00094">
    <property type="entry name" value="ADENYLTKNASE"/>
</dbReference>
<dbReference type="SUPFAM" id="SSF52540">
    <property type="entry name" value="P-loop containing nucleoside triphosphate hydrolases"/>
    <property type="match status" value="1"/>
</dbReference>
<dbReference type="PROSITE" id="PS00113">
    <property type="entry name" value="ADENYLATE_KINASE"/>
    <property type="match status" value="1"/>
</dbReference>
<comment type="function">
    <text evidence="1">Catalyzes the reversible transfer of the terminal phosphate group between ATP and AMP. Plays an important role in cellular energy homeostasis and in adenine nucleotide metabolism.</text>
</comment>
<comment type="catalytic activity">
    <reaction evidence="1">
        <text>AMP + ATP = 2 ADP</text>
        <dbReference type="Rhea" id="RHEA:12973"/>
        <dbReference type="ChEBI" id="CHEBI:30616"/>
        <dbReference type="ChEBI" id="CHEBI:456215"/>
        <dbReference type="ChEBI" id="CHEBI:456216"/>
        <dbReference type="EC" id="2.7.4.3"/>
    </reaction>
</comment>
<comment type="pathway">
    <text evidence="1">Purine metabolism; AMP biosynthesis via salvage pathway; AMP from ADP: step 1/1.</text>
</comment>
<comment type="subunit">
    <text evidence="1">Monomer.</text>
</comment>
<comment type="subcellular location">
    <subcellularLocation>
        <location evidence="1">Cytoplasm</location>
    </subcellularLocation>
</comment>
<comment type="domain">
    <text evidence="1">Consists of three domains, a large central CORE domain and two small peripheral domains, NMPbind and LID, which undergo movements during catalysis. The LID domain closes over the site of phosphoryl transfer upon ATP binding. Assembling and dissambling the active center during each catalytic cycle provides an effective means to prevent ATP hydrolysis.</text>
</comment>
<comment type="similarity">
    <text evidence="1">Belongs to the adenylate kinase family.</text>
</comment>